<keyword id="KW-0227">DNA damage</keyword>
<keyword id="KW-0234">DNA repair</keyword>
<keyword id="KW-0235">DNA replication</keyword>
<keyword id="KW-0436">Ligase</keyword>
<keyword id="KW-0460">Magnesium</keyword>
<keyword id="KW-0464">Manganese</keyword>
<keyword id="KW-0479">Metal-binding</keyword>
<keyword id="KW-0520">NAD</keyword>
<keyword id="KW-0862">Zinc</keyword>
<evidence type="ECO:0000255" key="1">
    <source>
        <dbReference type="HAMAP-Rule" id="MF_01588"/>
    </source>
</evidence>
<gene>
    <name evidence="1" type="primary">ligA</name>
    <name type="ordered locus">SFV_2463</name>
</gene>
<dbReference type="EC" id="6.5.1.2" evidence="1"/>
<dbReference type="EMBL" id="CP000266">
    <property type="protein sequence ID" value="ABF04567.1"/>
    <property type="molecule type" value="Genomic_DNA"/>
</dbReference>
<dbReference type="RefSeq" id="WP_000443652.1">
    <property type="nucleotide sequence ID" value="NC_008258.1"/>
</dbReference>
<dbReference type="SMR" id="Q0T298"/>
<dbReference type="KEGG" id="sfv:SFV_2463"/>
<dbReference type="HOGENOM" id="CLU_007764_2_1_6"/>
<dbReference type="Proteomes" id="UP000000659">
    <property type="component" value="Chromosome"/>
</dbReference>
<dbReference type="GO" id="GO:0005829">
    <property type="term" value="C:cytosol"/>
    <property type="evidence" value="ECO:0007669"/>
    <property type="project" value="TreeGrafter"/>
</dbReference>
<dbReference type="GO" id="GO:0003677">
    <property type="term" value="F:DNA binding"/>
    <property type="evidence" value="ECO:0007669"/>
    <property type="project" value="InterPro"/>
</dbReference>
<dbReference type="GO" id="GO:0003911">
    <property type="term" value="F:DNA ligase (NAD+) activity"/>
    <property type="evidence" value="ECO:0007669"/>
    <property type="project" value="UniProtKB-UniRule"/>
</dbReference>
<dbReference type="GO" id="GO:0046872">
    <property type="term" value="F:metal ion binding"/>
    <property type="evidence" value="ECO:0007669"/>
    <property type="project" value="UniProtKB-KW"/>
</dbReference>
<dbReference type="GO" id="GO:0006281">
    <property type="term" value="P:DNA repair"/>
    <property type="evidence" value="ECO:0007669"/>
    <property type="project" value="UniProtKB-KW"/>
</dbReference>
<dbReference type="GO" id="GO:0006260">
    <property type="term" value="P:DNA replication"/>
    <property type="evidence" value="ECO:0007669"/>
    <property type="project" value="UniProtKB-KW"/>
</dbReference>
<dbReference type="CDD" id="cd17748">
    <property type="entry name" value="BRCT_DNA_ligase_like"/>
    <property type="match status" value="1"/>
</dbReference>
<dbReference type="CDD" id="cd00114">
    <property type="entry name" value="LIGANc"/>
    <property type="match status" value="1"/>
</dbReference>
<dbReference type="FunFam" id="1.10.150.20:FF:000006">
    <property type="entry name" value="DNA ligase"/>
    <property type="match status" value="1"/>
</dbReference>
<dbReference type="FunFam" id="1.10.150.20:FF:000007">
    <property type="entry name" value="DNA ligase"/>
    <property type="match status" value="1"/>
</dbReference>
<dbReference type="FunFam" id="1.10.287.610:FF:000002">
    <property type="entry name" value="DNA ligase"/>
    <property type="match status" value="1"/>
</dbReference>
<dbReference type="FunFam" id="2.40.50.140:FF:000012">
    <property type="entry name" value="DNA ligase"/>
    <property type="match status" value="1"/>
</dbReference>
<dbReference type="FunFam" id="3.30.470.30:FF:000001">
    <property type="entry name" value="DNA ligase"/>
    <property type="match status" value="1"/>
</dbReference>
<dbReference type="FunFam" id="3.40.50.10190:FF:000004">
    <property type="entry name" value="DNA ligase"/>
    <property type="match status" value="1"/>
</dbReference>
<dbReference type="FunFam" id="6.20.10.30:FF:000001">
    <property type="entry name" value="DNA ligase"/>
    <property type="match status" value="1"/>
</dbReference>
<dbReference type="Gene3D" id="6.20.10.30">
    <property type="match status" value="1"/>
</dbReference>
<dbReference type="Gene3D" id="1.10.150.20">
    <property type="entry name" value="5' to 3' exonuclease, C-terminal subdomain"/>
    <property type="match status" value="2"/>
</dbReference>
<dbReference type="Gene3D" id="3.40.50.10190">
    <property type="entry name" value="BRCT domain"/>
    <property type="match status" value="1"/>
</dbReference>
<dbReference type="Gene3D" id="3.30.470.30">
    <property type="entry name" value="DNA ligase/mRNA capping enzyme"/>
    <property type="match status" value="1"/>
</dbReference>
<dbReference type="Gene3D" id="1.10.287.610">
    <property type="entry name" value="Helix hairpin bin"/>
    <property type="match status" value="1"/>
</dbReference>
<dbReference type="Gene3D" id="2.40.50.140">
    <property type="entry name" value="Nucleic acid-binding proteins"/>
    <property type="match status" value="1"/>
</dbReference>
<dbReference type="HAMAP" id="MF_01588">
    <property type="entry name" value="DNA_ligase_A"/>
    <property type="match status" value="1"/>
</dbReference>
<dbReference type="InterPro" id="IPR001357">
    <property type="entry name" value="BRCT_dom"/>
</dbReference>
<dbReference type="InterPro" id="IPR036420">
    <property type="entry name" value="BRCT_dom_sf"/>
</dbReference>
<dbReference type="InterPro" id="IPR041663">
    <property type="entry name" value="DisA/LigA_HHH"/>
</dbReference>
<dbReference type="InterPro" id="IPR001679">
    <property type="entry name" value="DNA_ligase"/>
</dbReference>
<dbReference type="InterPro" id="IPR018239">
    <property type="entry name" value="DNA_ligase_AS"/>
</dbReference>
<dbReference type="InterPro" id="IPR033136">
    <property type="entry name" value="DNA_ligase_CS"/>
</dbReference>
<dbReference type="InterPro" id="IPR013839">
    <property type="entry name" value="DNAligase_adenylation"/>
</dbReference>
<dbReference type="InterPro" id="IPR013840">
    <property type="entry name" value="DNAligase_N"/>
</dbReference>
<dbReference type="InterPro" id="IPR003583">
    <property type="entry name" value="Hlx-hairpin-Hlx_DNA-bd_motif"/>
</dbReference>
<dbReference type="InterPro" id="IPR012340">
    <property type="entry name" value="NA-bd_OB-fold"/>
</dbReference>
<dbReference type="InterPro" id="IPR004150">
    <property type="entry name" value="NAD_DNA_ligase_OB"/>
</dbReference>
<dbReference type="InterPro" id="IPR010994">
    <property type="entry name" value="RuvA_2-like"/>
</dbReference>
<dbReference type="InterPro" id="IPR004149">
    <property type="entry name" value="Znf_DNAligase_C4"/>
</dbReference>
<dbReference type="NCBIfam" id="TIGR00575">
    <property type="entry name" value="dnlj"/>
    <property type="match status" value="1"/>
</dbReference>
<dbReference type="NCBIfam" id="NF005932">
    <property type="entry name" value="PRK07956.1"/>
    <property type="match status" value="1"/>
</dbReference>
<dbReference type="PANTHER" id="PTHR23389">
    <property type="entry name" value="CHROMOSOME TRANSMISSION FIDELITY FACTOR 18"/>
    <property type="match status" value="1"/>
</dbReference>
<dbReference type="PANTHER" id="PTHR23389:SF9">
    <property type="entry name" value="DNA LIGASE"/>
    <property type="match status" value="1"/>
</dbReference>
<dbReference type="Pfam" id="PF00533">
    <property type="entry name" value="BRCT"/>
    <property type="match status" value="1"/>
</dbReference>
<dbReference type="Pfam" id="PF01653">
    <property type="entry name" value="DNA_ligase_aden"/>
    <property type="match status" value="1"/>
</dbReference>
<dbReference type="Pfam" id="PF03120">
    <property type="entry name" value="DNA_ligase_OB"/>
    <property type="match status" value="1"/>
</dbReference>
<dbReference type="Pfam" id="PF03119">
    <property type="entry name" value="DNA_ligase_ZBD"/>
    <property type="match status" value="1"/>
</dbReference>
<dbReference type="Pfam" id="PF12826">
    <property type="entry name" value="HHH_2"/>
    <property type="match status" value="1"/>
</dbReference>
<dbReference type="Pfam" id="PF14520">
    <property type="entry name" value="HHH_5"/>
    <property type="match status" value="1"/>
</dbReference>
<dbReference type="Pfam" id="PF22745">
    <property type="entry name" value="Nlig-Ia"/>
    <property type="match status" value="1"/>
</dbReference>
<dbReference type="PIRSF" id="PIRSF001604">
    <property type="entry name" value="LigA"/>
    <property type="match status" value="1"/>
</dbReference>
<dbReference type="SMART" id="SM00292">
    <property type="entry name" value="BRCT"/>
    <property type="match status" value="1"/>
</dbReference>
<dbReference type="SMART" id="SM00278">
    <property type="entry name" value="HhH1"/>
    <property type="match status" value="4"/>
</dbReference>
<dbReference type="SMART" id="SM00532">
    <property type="entry name" value="LIGANc"/>
    <property type="match status" value="1"/>
</dbReference>
<dbReference type="SUPFAM" id="SSF52113">
    <property type="entry name" value="BRCT domain"/>
    <property type="match status" value="1"/>
</dbReference>
<dbReference type="SUPFAM" id="SSF56091">
    <property type="entry name" value="DNA ligase/mRNA capping enzyme, catalytic domain"/>
    <property type="match status" value="1"/>
</dbReference>
<dbReference type="SUPFAM" id="SSF50249">
    <property type="entry name" value="Nucleic acid-binding proteins"/>
    <property type="match status" value="1"/>
</dbReference>
<dbReference type="SUPFAM" id="SSF47781">
    <property type="entry name" value="RuvA domain 2-like"/>
    <property type="match status" value="1"/>
</dbReference>
<dbReference type="PROSITE" id="PS50172">
    <property type="entry name" value="BRCT"/>
    <property type="match status" value="1"/>
</dbReference>
<dbReference type="PROSITE" id="PS01055">
    <property type="entry name" value="DNA_LIGASE_N1"/>
    <property type="match status" value="1"/>
</dbReference>
<dbReference type="PROSITE" id="PS01056">
    <property type="entry name" value="DNA_LIGASE_N2"/>
    <property type="match status" value="1"/>
</dbReference>
<feature type="chain" id="PRO_0000313437" description="DNA ligase">
    <location>
        <begin position="1"/>
        <end position="671"/>
    </location>
</feature>
<feature type="domain" description="BRCT" evidence="1">
    <location>
        <begin position="593"/>
        <end position="671"/>
    </location>
</feature>
<feature type="active site" description="N6-AMP-lysine intermediate" evidence="1">
    <location>
        <position position="115"/>
    </location>
</feature>
<feature type="binding site" evidence="1">
    <location>
        <begin position="32"/>
        <end position="36"/>
    </location>
    <ligand>
        <name>NAD(+)</name>
        <dbReference type="ChEBI" id="CHEBI:57540"/>
    </ligand>
</feature>
<feature type="binding site" evidence="1">
    <location>
        <begin position="81"/>
        <end position="82"/>
    </location>
    <ligand>
        <name>NAD(+)</name>
        <dbReference type="ChEBI" id="CHEBI:57540"/>
    </ligand>
</feature>
<feature type="binding site" evidence="1">
    <location>
        <position position="113"/>
    </location>
    <ligand>
        <name>NAD(+)</name>
        <dbReference type="ChEBI" id="CHEBI:57540"/>
    </ligand>
</feature>
<feature type="binding site" evidence="1">
    <location>
        <position position="136"/>
    </location>
    <ligand>
        <name>NAD(+)</name>
        <dbReference type="ChEBI" id="CHEBI:57540"/>
    </ligand>
</feature>
<feature type="binding site" evidence="1">
    <location>
        <position position="173"/>
    </location>
    <ligand>
        <name>NAD(+)</name>
        <dbReference type="ChEBI" id="CHEBI:57540"/>
    </ligand>
</feature>
<feature type="binding site" evidence="1">
    <location>
        <position position="290"/>
    </location>
    <ligand>
        <name>NAD(+)</name>
        <dbReference type="ChEBI" id="CHEBI:57540"/>
    </ligand>
</feature>
<feature type="binding site" evidence="1">
    <location>
        <position position="314"/>
    </location>
    <ligand>
        <name>NAD(+)</name>
        <dbReference type="ChEBI" id="CHEBI:57540"/>
    </ligand>
</feature>
<feature type="binding site" evidence="1">
    <location>
        <position position="408"/>
    </location>
    <ligand>
        <name>Zn(2+)</name>
        <dbReference type="ChEBI" id="CHEBI:29105"/>
    </ligand>
</feature>
<feature type="binding site" evidence="1">
    <location>
        <position position="411"/>
    </location>
    <ligand>
        <name>Zn(2+)</name>
        <dbReference type="ChEBI" id="CHEBI:29105"/>
    </ligand>
</feature>
<feature type="binding site" evidence="1">
    <location>
        <position position="426"/>
    </location>
    <ligand>
        <name>Zn(2+)</name>
        <dbReference type="ChEBI" id="CHEBI:29105"/>
    </ligand>
</feature>
<feature type="binding site" evidence="1">
    <location>
        <position position="432"/>
    </location>
    <ligand>
        <name>Zn(2+)</name>
        <dbReference type="ChEBI" id="CHEBI:29105"/>
    </ligand>
</feature>
<reference key="1">
    <citation type="journal article" date="2006" name="BMC Genomics">
        <title>Complete genome sequence of Shigella flexneri 5b and comparison with Shigella flexneri 2a.</title>
        <authorList>
            <person name="Nie H."/>
            <person name="Yang F."/>
            <person name="Zhang X."/>
            <person name="Yang J."/>
            <person name="Chen L."/>
            <person name="Wang J."/>
            <person name="Xiong Z."/>
            <person name="Peng J."/>
            <person name="Sun L."/>
            <person name="Dong J."/>
            <person name="Xue Y."/>
            <person name="Xu X."/>
            <person name="Chen S."/>
            <person name="Yao Z."/>
            <person name="Shen Y."/>
            <person name="Jin Q."/>
        </authorList>
    </citation>
    <scope>NUCLEOTIDE SEQUENCE [LARGE SCALE GENOMIC DNA]</scope>
    <source>
        <strain>8401</strain>
    </source>
</reference>
<comment type="function">
    <text evidence="1">DNA ligase that catalyzes the formation of phosphodiester linkages between 5'-phosphoryl and 3'-hydroxyl groups in double-stranded DNA using NAD as a coenzyme and as the energy source for the reaction. It is essential for DNA replication and repair of damaged DNA.</text>
</comment>
<comment type="catalytic activity">
    <reaction evidence="1">
        <text>NAD(+) + (deoxyribonucleotide)n-3'-hydroxyl + 5'-phospho-(deoxyribonucleotide)m = (deoxyribonucleotide)n+m + AMP + beta-nicotinamide D-nucleotide.</text>
        <dbReference type="EC" id="6.5.1.2"/>
    </reaction>
</comment>
<comment type="cofactor">
    <cofactor evidence="1">
        <name>Mg(2+)</name>
        <dbReference type="ChEBI" id="CHEBI:18420"/>
    </cofactor>
    <cofactor evidence="1">
        <name>Mn(2+)</name>
        <dbReference type="ChEBI" id="CHEBI:29035"/>
    </cofactor>
</comment>
<comment type="similarity">
    <text evidence="1">Belongs to the NAD-dependent DNA ligase family. LigA subfamily.</text>
</comment>
<proteinExistence type="inferred from homology"/>
<organism>
    <name type="scientific">Shigella flexneri serotype 5b (strain 8401)</name>
    <dbReference type="NCBI Taxonomy" id="373384"/>
    <lineage>
        <taxon>Bacteria</taxon>
        <taxon>Pseudomonadati</taxon>
        <taxon>Pseudomonadota</taxon>
        <taxon>Gammaproteobacteria</taxon>
        <taxon>Enterobacterales</taxon>
        <taxon>Enterobacteriaceae</taxon>
        <taxon>Shigella</taxon>
    </lineage>
</organism>
<sequence length="671" mass="73623">MESIEQQLTELRTTLCHHEYLYHVMDAPEIPDAEYDRLMRELRELETKHPELITPDSPTQRVGAAPLAAFSQIRHEVPMLSLDNVFDEESFLAFNKRVQDRLKNNEKVTWCCELKLDGLAVSILYENGVLVSAATRGDGTTGEDITSNVRTIRAIPLKLHGENIPARLEVRGEVFLPQAGFEKINEDARRTGGKVFANPRNAAAGSLRQLDPRITAKRPLTFFCYGVGVLEGGELPDTHLGRLLQFKKWGVPVSDRVTLCESAEEVLAFYHKVEEDRPTLGFDIDGVVIKVNSLEQQEQLGFVARAPRWAVAFKFPAQEQMTFVRDVEFQVGRTGAITPVARLEPVHVAGVLVSNATLHNADEIERLGLRIGDKVVIRRAGDVIPQVVNVVLSERPEDTREVVFPTHCPVCGSDVERVEGEAVARCTGGLICGAQRKESLKHFVSRRAMDVDGMGDKIIDQLVEKEYVHTPADLFKLTAGKLTGLERMGPKLAQNVVNALEKAKETTFARFLYALGIREVGEATAAGLAAYFGTLEALEAASIEELQKVPDVGIVVASHVHNFFAEESNRNVISELLAEGVHWPAPIVINAEEIDSPFAGKTVVLTGSLSQMSRDDAKARLVELGAKVAGSVSKKTDLVIAGEAAGSKLAKAQELGIEVIDEAEMLRLLGS</sequence>
<protein>
    <recommendedName>
        <fullName evidence="1">DNA ligase</fullName>
        <ecNumber evidence="1">6.5.1.2</ecNumber>
    </recommendedName>
    <alternativeName>
        <fullName evidence="1">Polydeoxyribonucleotide synthase [NAD(+)]</fullName>
    </alternativeName>
</protein>
<name>DNLJ_SHIF8</name>
<accession>Q0T298</accession>